<dbReference type="EC" id="6.1.1.1" evidence="1"/>
<dbReference type="EMBL" id="AE017226">
    <property type="protein sequence ID" value="AAS11352.1"/>
    <property type="molecule type" value="Genomic_DNA"/>
</dbReference>
<dbReference type="RefSeq" id="NP_971471.1">
    <property type="nucleotide sequence ID" value="NC_002967.9"/>
</dbReference>
<dbReference type="RefSeq" id="WP_002682133.1">
    <property type="nucleotide sequence ID" value="NC_002967.9"/>
</dbReference>
<dbReference type="SMR" id="Q73PD8"/>
<dbReference type="STRING" id="243275.TDE_0861"/>
<dbReference type="PaxDb" id="243275-TDE_0861"/>
<dbReference type="GeneID" id="2741372"/>
<dbReference type="KEGG" id="tde:TDE_0861"/>
<dbReference type="PATRIC" id="fig|243275.7.peg.830"/>
<dbReference type="eggNOG" id="COG0162">
    <property type="taxonomic scope" value="Bacteria"/>
</dbReference>
<dbReference type="HOGENOM" id="CLU_024003_0_3_12"/>
<dbReference type="OrthoDB" id="9804243at2"/>
<dbReference type="Proteomes" id="UP000008212">
    <property type="component" value="Chromosome"/>
</dbReference>
<dbReference type="GO" id="GO:0005829">
    <property type="term" value="C:cytosol"/>
    <property type="evidence" value="ECO:0007669"/>
    <property type="project" value="TreeGrafter"/>
</dbReference>
<dbReference type="GO" id="GO:0005524">
    <property type="term" value="F:ATP binding"/>
    <property type="evidence" value="ECO:0007669"/>
    <property type="project" value="UniProtKB-UniRule"/>
</dbReference>
<dbReference type="GO" id="GO:0003723">
    <property type="term" value="F:RNA binding"/>
    <property type="evidence" value="ECO:0007669"/>
    <property type="project" value="UniProtKB-KW"/>
</dbReference>
<dbReference type="GO" id="GO:0004831">
    <property type="term" value="F:tyrosine-tRNA ligase activity"/>
    <property type="evidence" value="ECO:0007669"/>
    <property type="project" value="UniProtKB-UniRule"/>
</dbReference>
<dbReference type="GO" id="GO:0006437">
    <property type="term" value="P:tyrosyl-tRNA aminoacylation"/>
    <property type="evidence" value="ECO:0007669"/>
    <property type="project" value="UniProtKB-UniRule"/>
</dbReference>
<dbReference type="CDD" id="cd00165">
    <property type="entry name" value="S4"/>
    <property type="match status" value="1"/>
</dbReference>
<dbReference type="CDD" id="cd00805">
    <property type="entry name" value="TyrRS_core"/>
    <property type="match status" value="1"/>
</dbReference>
<dbReference type="FunFam" id="1.10.240.10:FF:000001">
    <property type="entry name" value="Tyrosine--tRNA ligase"/>
    <property type="match status" value="1"/>
</dbReference>
<dbReference type="Gene3D" id="3.40.50.620">
    <property type="entry name" value="HUPs"/>
    <property type="match status" value="1"/>
</dbReference>
<dbReference type="Gene3D" id="3.10.290.10">
    <property type="entry name" value="RNA-binding S4 domain"/>
    <property type="match status" value="1"/>
</dbReference>
<dbReference type="Gene3D" id="1.10.240.10">
    <property type="entry name" value="Tyrosyl-Transfer RNA Synthetase"/>
    <property type="match status" value="1"/>
</dbReference>
<dbReference type="HAMAP" id="MF_02006">
    <property type="entry name" value="Tyr_tRNA_synth_type1"/>
    <property type="match status" value="1"/>
</dbReference>
<dbReference type="InterPro" id="IPR001412">
    <property type="entry name" value="aa-tRNA-synth_I_CS"/>
</dbReference>
<dbReference type="InterPro" id="IPR002305">
    <property type="entry name" value="aa-tRNA-synth_Ic"/>
</dbReference>
<dbReference type="InterPro" id="IPR014729">
    <property type="entry name" value="Rossmann-like_a/b/a_fold"/>
</dbReference>
<dbReference type="InterPro" id="IPR036986">
    <property type="entry name" value="S4_RNA-bd_sf"/>
</dbReference>
<dbReference type="InterPro" id="IPR054608">
    <property type="entry name" value="SYY-like_C"/>
</dbReference>
<dbReference type="InterPro" id="IPR002307">
    <property type="entry name" value="Tyr-tRNA-ligase"/>
</dbReference>
<dbReference type="InterPro" id="IPR024088">
    <property type="entry name" value="Tyr-tRNA-ligase_bac-type"/>
</dbReference>
<dbReference type="InterPro" id="IPR024107">
    <property type="entry name" value="Tyr-tRNA-ligase_bac_1"/>
</dbReference>
<dbReference type="NCBIfam" id="TIGR00234">
    <property type="entry name" value="tyrS"/>
    <property type="match status" value="1"/>
</dbReference>
<dbReference type="PANTHER" id="PTHR11766:SF0">
    <property type="entry name" value="TYROSINE--TRNA LIGASE, MITOCHONDRIAL"/>
    <property type="match status" value="1"/>
</dbReference>
<dbReference type="PANTHER" id="PTHR11766">
    <property type="entry name" value="TYROSYL-TRNA SYNTHETASE"/>
    <property type="match status" value="1"/>
</dbReference>
<dbReference type="Pfam" id="PF22421">
    <property type="entry name" value="SYY_C-terminal"/>
    <property type="match status" value="1"/>
</dbReference>
<dbReference type="Pfam" id="PF00579">
    <property type="entry name" value="tRNA-synt_1b"/>
    <property type="match status" value="1"/>
</dbReference>
<dbReference type="PRINTS" id="PR01040">
    <property type="entry name" value="TRNASYNTHTYR"/>
</dbReference>
<dbReference type="SUPFAM" id="SSF55174">
    <property type="entry name" value="Alpha-L RNA-binding motif"/>
    <property type="match status" value="1"/>
</dbReference>
<dbReference type="SUPFAM" id="SSF52374">
    <property type="entry name" value="Nucleotidylyl transferase"/>
    <property type="match status" value="1"/>
</dbReference>
<dbReference type="PROSITE" id="PS00178">
    <property type="entry name" value="AA_TRNA_LIGASE_I"/>
    <property type="match status" value="1"/>
</dbReference>
<dbReference type="PROSITE" id="PS50889">
    <property type="entry name" value="S4"/>
    <property type="match status" value="1"/>
</dbReference>
<organism>
    <name type="scientific">Treponema denticola (strain ATCC 35405 / DSM 14222 / CIP 103919 / JCM 8153 / KCTC 15104)</name>
    <dbReference type="NCBI Taxonomy" id="243275"/>
    <lineage>
        <taxon>Bacteria</taxon>
        <taxon>Pseudomonadati</taxon>
        <taxon>Spirochaetota</taxon>
        <taxon>Spirochaetia</taxon>
        <taxon>Spirochaetales</taxon>
        <taxon>Treponemataceae</taxon>
        <taxon>Treponema</taxon>
    </lineage>
</organism>
<protein>
    <recommendedName>
        <fullName evidence="1">Tyrosine--tRNA ligase</fullName>
        <ecNumber evidence="1">6.1.1.1</ecNumber>
    </recommendedName>
    <alternativeName>
        <fullName evidence="1">Tyrosyl-tRNA synthetase</fullName>
        <shortName evidence="1">TyrRS</shortName>
    </alternativeName>
</protein>
<name>SYY_TREDE</name>
<proteinExistence type="inferred from homology"/>
<sequence length="406" mass="45312">MNKALKILQERGFIQQCTDLQALSDRMDKGQIAFYTGTDPTGPSLHIGHMVPIFALKHLCREGHKGVVLVGGGTSRIGDPSGKTEMRKMLSYDELDKNAASIQKQIEKFLAKDIKNVRFVNNKDWLADLNYIDFLRDIGSHFSVNKMLSFEAYKKRMETGLSFLEFNYQLLQSYDFLMLNQNYNIELQIGGDDQWGNMVAGSDLIRRKGGGEVFALTFSLVTRADGQKMGKSEKGAIFLDTALVSPYDFFQYWRNTADADVEKFMLLFTFLSIEEIKSVCAGDINKAKERLAFEVTALIHGKEEAEKALEGARAAFSGGGNKDAMPTANLSLSKLNEGIGIIDLFAEAGLASTKSDARRLVEQGGAFINEEKISDIKALIGKEKLDKDNEMILRAGKKRFMRIIFS</sequence>
<reference key="1">
    <citation type="journal article" date="2004" name="Proc. Natl. Acad. Sci. U.S.A.">
        <title>Comparison of the genome of the oral pathogen Treponema denticola with other spirochete genomes.</title>
        <authorList>
            <person name="Seshadri R."/>
            <person name="Myers G.S.A."/>
            <person name="Tettelin H."/>
            <person name="Eisen J.A."/>
            <person name="Heidelberg J.F."/>
            <person name="Dodson R.J."/>
            <person name="Davidsen T.M."/>
            <person name="DeBoy R.T."/>
            <person name="Fouts D.E."/>
            <person name="Haft D.H."/>
            <person name="Selengut J."/>
            <person name="Ren Q."/>
            <person name="Brinkac L.M."/>
            <person name="Madupu R."/>
            <person name="Kolonay J.F."/>
            <person name="Durkin S.A."/>
            <person name="Daugherty S.C."/>
            <person name="Shetty J."/>
            <person name="Shvartsbeyn A."/>
            <person name="Gebregeorgis E."/>
            <person name="Geer K."/>
            <person name="Tsegaye G."/>
            <person name="Malek J.A."/>
            <person name="Ayodeji B."/>
            <person name="Shatsman S."/>
            <person name="McLeod M.P."/>
            <person name="Smajs D."/>
            <person name="Howell J.K."/>
            <person name="Pal S."/>
            <person name="Amin A."/>
            <person name="Vashisth P."/>
            <person name="McNeill T.Z."/>
            <person name="Xiang Q."/>
            <person name="Sodergren E."/>
            <person name="Baca E."/>
            <person name="Weinstock G.M."/>
            <person name="Norris S.J."/>
            <person name="Fraser C.M."/>
            <person name="Paulsen I.T."/>
        </authorList>
    </citation>
    <scope>NUCLEOTIDE SEQUENCE [LARGE SCALE GENOMIC DNA]</scope>
    <source>
        <strain>ATCC 35405 / DSM 14222 / CIP 103919 / JCM 8153 / KCTC 15104</strain>
    </source>
</reference>
<accession>Q73PD8</accession>
<comment type="function">
    <text evidence="1">Catalyzes the attachment of tyrosine to tRNA(Tyr) in a two-step reaction: tyrosine is first activated by ATP to form Tyr-AMP and then transferred to the acceptor end of tRNA(Tyr).</text>
</comment>
<comment type="catalytic activity">
    <reaction evidence="1">
        <text>tRNA(Tyr) + L-tyrosine + ATP = L-tyrosyl-tRNA(Tyr) + AMP + diphosphate + H(+)</text>
        <dbReference type="Rhea" id="RHEA:10220"/>
        <dbReference type="Rhea" id="RHEA-COMP:9706"/>
        <dbReference type="Rhea" id="RHEA-COMP:9707"/>
        <dbReference type="ChEBI" id="CHEBI:15378"/>
        <dbReference type="ChEBI" id="CHEBI:30616"/>
        <dbReference type="ChEBI" id="CHEBI:33019"/>
        <dbReference type="ChEBI" id="CHEBI:58315"/>
        <dbReference type="ChEBI" id="CHEBI:78442"/>
        <dbReference type="ChEBI" id="CHEBI:78536"/>
        <dbReference type="ChEBI" id="CHEBI:456215"/>
        <dbReference type="EC" id="6.1.1.1"/>
    </reaction>
</comment>
<comment type="subunit">
    <text evidence="1">Homodimer.</text>
</comment>
<comment type="subcellular location">
    <subcellularLocation>
        <location evidence="1">Cytoplasm</location>
    </subcellularLocation>
</comment>
<comment type="similarity">
    <text evidence="1">Belongs to the class-I aminoacyl-tRNA synthetase family. TyrS type 1 subfamily.</text>
</comment>
<evidence type="ECO:0000255" key="1">
    <source>
        <dbReference type="HAMAP-Rule" id="MF_02006"/>
    </source>
</evidence>
<feature type="chain" id="PRO_0000234804" description="Tyrosine--tRNA ligase">
    <location>
        <begin position="1"/>
        <end position="406"/>
    </location>
</feature>
<feature type="domain" description="S4 RNA-binding" evidence="1">
    <location>
        <begin position="339"/>
        <end position="405"/>
    </location>
</feature>
<feature type="short sequence motif" description="'HIGH' region">
    <location>
        <begin position="40"/>
        <end position="49"/>
    </location>
</feature>
<feature type="short sequence motif" description="'KMSKS' region">
    <location>
        <begin position="228"/>
        <end position="232"/>
    </location>
</feature>
<feature type="binding site" evidence="1">
    <location>
        <position position="35"/>
    </location>
    <ligand>
        <name>L-tyrosine</name>
        <dbReference type="ChEBI" id="CHEBI:58315"/>
    </ligand>
</feature>
<feature type="binding site" evidence="1">
    <location>
        <position position="168"/>
    </location>
    <ligand>
        <name>L-tyrosine</name>
        <dbReference type="ChEBI" id="CHEBI:58315"/>
    </ligand>
</feature>
<feature type="binding site" evidence="1">
    <location>
        <position position="172"/>
    </location>
    <ligand>
        <name>L-tyrosine</name>
        <dbReference type="ChEBI" id="CHEBI:58315"/>
    </ligand>
</feature>
<feature type="binding site" evidence="1">
    <location>
        <position position="231"/>
    </location>
    <ligand>
        <name>ATP</name>
        <dbReference type="ChEBI" id="CHEBI:30616"/>
    </ligand>
</feature>
<gene>
    <name evidence="1" type="primary">tyrS</name>
    <name type="ordered locus">TDE_0861</name>
</gene>
<keyword id="KW-0030">Aminoacyl-tRNA synthetase</keyword>
<keyword id="KW-0067">ATP-binding</keyword>
<keyword id="KW-0963">Cytoplasm</keyword>
<keyword id="KW-0436">Ligase</keyword>
<keyword id="KW-0547">Nucleotide-binding</keyword>
<keyword id="KW-0648">Protein biosynthesis</keyword>
<keyword id="KW-1185">Reference proteome</keyword>
<keyword id="KW-0694">RNA-binding</keyword>